<proteinExistence type="evidence at protein level"/>
<sequence length="352" mass="38735">MGGLYSEYLNPEKVQEHYNYTKETLDMQETPSRKVASAFIIILCCAIVVENLLVLIAVARNSKFHSAMYLFLGNLAASDLLAGVAFVANTLLSGPVTLSLTPLQWFAREGSAFITLSASVFSLLAIAIERQVAIAKVKLYGSDKSCRMLMLIGASWLISLILGGLPILGWNCLDHLEACSTVLPLYAKHYVLCVVTIFSVILLAIVALYVRIYFVVRSSHADVAGPQTLALLKTVTIVLGVFIICWLPAFSILLLDSTCPVRACPVLYKAHYFFAFATLNSLLNPVIYTWRSRDLRREVLRPLLCWRQGKGATGRRGGNPGHRLLPLRSSSSLERGLHMPTSPTFLEGNTVV</sequence>
<comment type="function">
    <text evidence="2 5 6">Receptor for the lysosphingolipid sphingosine 1-phosphate (S1P) (PubMed:10383399). S1P is a bioactive lysophospholipid that elicits diverse physiological effects on most types of cells and tissues (PubMed:10383399). Receptor for the chemokine-like protein FAM19A5 (PubMed:29453251). Mediates the inhibitory effect of FAM19A5 on vascular smooth muscle cell proliferation and migration (PubMed:29453251). In lymphoid follicles, couples the binding of S1P to the activation of GNA13 and downstream inhibition of AKT activation leading to suppression of germinal center (GC) B cell growth and migration outside the GC niche.</text>
</comment>
<comment type="subcellular location">
    <subcellularLocation>
        <location evidence="2">Cell membrane</location>
        <topology evidence="3">Multi-pass membrane protein</topology>
    </subcellularLocation>
</comment>
<comment type="tissue specificity">
    <text>Expressed in all developing tissues with highest levels detected in primitive, transformed cells. Relative abundance: lung &gt; kidney = skin = gut &gt; spleen &gt; brain &gt; liver.</text>
</comment>
<comment type="similarity">
    <text evidence="4">Belongs to the G-protein coupled receptor 1 family.</text>
</comment>
<gene>
    <name type="primary">S1pr2</name>
    <name type="synonym">Edg5</name>
</gene>
<keyword id="KW-1003">Cell membrane</keyword>
<keyword id="KW-0297">G-protein coupled receptor</keyword>
<keyword id="KW-0325">Glycoprotein</keyword>
<keyword id="KW-0449">Lipoprotein</keyword>
<keyword id="KW-0472">Membrane</keyword>
<keyword id="KW-0564">Palmitate</keyword>
<keyword id="KW-0675">Receptor</keyword>
<keyword id="KW-1185">Reference proteome</keyword>
<keyword id="KW-0807">Transducer</keyword>
<keyword id="KW-0812">Transmembrane</keyword>
<keyword id="KW-1133">Transmembrane helix</keyword>
<feature type="chain" id="PRO_0000069429" description="Sphingosine 1-phosphate receptor 2">
    <location>
        <begin position="1"/>
        <end position="352"/>
    </location>
</feature>
<feature type="topological domain" description="Extracellular" evidence="1">
    <location>
        <begin position="1"/>
        <end position="34"/>
    </location>
</feature>
<feature type="transmembrane region" description="Helical; Name=1" evidence="1">
    <location>
        <begin position="35"/>
        <end position="59"/>
    </location>
</feature>
<feature type="topological domain" description="Cytoplasmic" evidence="1">
    <location>
        <begin position="60"/>
        <end position="66"/>
    </location>
</feature>
<feature type="transmembrane region" description="Helical; Name=2" evidence="1">
    <location>
        <begin position="67"/>
        <end position="95"/>
    </location>
</feature>
<feature type="topological domain" description="Extracellular" evidence="1">
    <location>
        <begin position="96"/>
        <end position="109"/>
    </location>
</feature>
<feature type="transmembrane region" description="Helical; Name=3" evidence="1">
    <location>
        <begin position="110"/>
        <end position="128"/>
    </location>
</feature>
<feature type="topological domain" description="Cytoplasmic" evidence="1">
    <location>
        <begin position="129"/>
        <end position="147"/>
    </location>
</feature>
<feature type="transmembrane region" description="Helical; Name=4" evidence="1">
    <location>
        <begin position="148"/>
        <end position="173"/>
    </location>
</feature>
<feature type="topological domain" description="Extracellular" evidence="1">
    <location>
        <begin position="174"/>
        <end position="189"/>
    </location>
</feature>
<feature type="transmembrane region" description="Helical; Name=5" evidence="1">
    <location>
        <begin position="190"/>
        <end position="210"/>
    </location>
</feature>
<feature type="topological domain" description="Cytoplasmic" evidence="1">
    <location>
        <begin position="211"/>
        <end position="233"/>
    </location>
</feature>
<feature type="transmembrane region" description="Helical; Name=6" evidence="1">
    <location>
        <begin position="234"/>
        <end position="255"/>
    </location>
</feature>
<feature type="topological domain" description="Extracellular" evidence="1">
    <location>
        <begin position="256"/>
        <end position="271"/>
    </location>
</feature>
<feature type="transmembrane region" description="Helical; Name=7" evidence="1">
    <location>
        <begin position="272"/>
        <end position="292"/>
    </location>
</feature>
<feature type="topological domain" description="Cytoplasmic" evidence="1">
    <location>
        <begin position="293"/>
        <end position="352"/>
    </location>
</feature>
<feature type="lipid moiety-binding region" description="S-palmitoyl cysteine" evidence="1">
    <location>
        <position position="305"/>
    </location>
</feature>
<feature type="glycosylation site" description="N-linked (GlcNAc...) asparagine" evidence="3">
    <location>
        <position position="19"/>
    </location>
</feature>
<organism>
    <name type="scientific">Rattus norvegicus</name>
    <name type="common">Rat</name>
    <dbReference type="NCBI Taxonomy" id="10116"/>
    <lineage>
        <taxon>Eukaryota</taxon>
        <taxon>Metazoa</taxon>
        <taxon>Chordata</taxon>
        <taxon>Craniata</taxon>
        <taxon>Vertebrata</taxon>
        <taxon>Euteleostomi</taxon>
        <taxon>Mammalia</taxon>
        <taxon>Eutheria</taxon>
        <taxon>Euarchontoglires</taxon>
        <taxon>Glires</taxon>
        <taxon>Rodentia</taxon>
        <taxon>Myomorpha</taxon>
        <taxon>Muroidea</taxon>
        <taxon>Muridae</taxon>
        <taxon>Murinae</taxon>
        <taxon>Rattus</taxon>
    </lineage>
</organism>
<protein>
    <recommendedName>
        <fullName>Sphingosine 1-phosphate receptor 2</fullName>
        <shortName>S1P receptor 2</shortName>
        <shortName>S1P2</shortName>
    </recommendedName>
    <alternativeName>
        <fullName>AGR16</fullName>
    </alternativeName>
    <alternativeName>
        <fullName>Endothelial differentiation G-protein coupled receptor 5</fullName>
    </alternativeName>
    <alternativeName>
        <fullName>G-protein coupled receptor H218</fullName>
    </alternativeName>
    <alternativeName>
        <fullName>Sphingosine 1-phosphate receptor Edg-5</fullName>
        <shortName>S1P receptor Edg-5</shortName>
    </alternativeName>
</protein>
<reference key="1">
    <citation type="journal article" date="1993" name="Biochem. Biophys. Res. Commun.">
        <title>Molecular cloning of a novel putative G protein-coupled receptor expressed in the cardiovascular system.</title>
        <authorList>
            <person name="Okazaki H."/>
            <person name="Ishizaka N."/>
            <person name="Sakurai T."/>
            <person name="Kurokawa K."/>
            <person name="Goto K."/>
            <person name="Kumada M."/>
            <person name="Takuwa Y."/>
        </authorList>
    </citation>
    <scope>NUCLEOTIDE SEQUENCE [MRNA]</scope>
    <source>
        <tissue>Aortic smooth muscle</tissue>
    </source>
</reference>
<reference key="2">
    <citation type="journal article" date="1994" name="Mol. Cell. Neurosci.">
        <title>Cloning and characterization of a putative G-protein coupled receptor potentially involved in development.</title>
        <authorList>
            <person name="Maclennan A.J."/>
            <person name="Browe C.S."/>
            <person name="Gaskin A.A."/>
            <person name="Lado D.C."/>
            <person name="Shaw G."/>
        </authorList>
    </citation>
    <scope>NUCLEOTIDE SEQUENCE [MRNA]</scope>
    <source>
        <tissue>Brain</tissue>
        <tissue>Lung</tissue>
    </source>
</reference>
<reference key="3">
    <citation type="journal article" date="1997" name="FEBS Lett.">
        <title>Identification of cDNAs encoding two G protein-coupled receptors for lysosphingolipids.</title>
        <authorList>
            <person name="An S."/>
            <person name="Bleu T."/>
            <person name="Huang W."/>
            <person name="Hallmark O.G."/>
            <person name="Coughlin S.R."/>
            <person name="Goetzl E.J."/>
        </authorList>
    </citation>
    <scope>NUCLEOTIDE SEQUENCE [MRNA]</scope>
    <source>
        <tissue>Brain</tissue>
    </source>
</reference>
<reference key="4">
    <citation type="journal article" date="1999" name="J. Biol. Chem.">
        <title>Differential pharmacological properties and signal transduction of the sphingosine 1-phosphate receptors EDG-1, EDG-3, and EDG-5.</title>
        <authorList>
            <person name="Ancellin N."/>
            <person name="Hla T."/>
        </authorList>
    </citation>
    <scope>PHARMACOLOGICAL CHARACTERIZATION</scope>
</reference>
<reference key="5">
    <citation type="journal article" date="2018" name="Circulation">
        <title>Novel Adipokine, FAM19A5, Inhibits Neointima Formation After Injury Through Sphingosine-1-Phosphate Receptor 2.</title>
        <authorList>
            <person name="Wang Y."/>
            <person name="Chen D."/>
            <person name="Zhang Y."/>
            <person name="Wang P."/>
            <person name="Zheng C."/>
            <person name="Zhang S."/>
            <person name="Yu B."/>
            <person name="Zhang L."/>
            <person name="Zhao G."/>
            <person name="Ma B."/>
            <person name="Cai Z."/>
            <person name="Xie N."/>
            <person name="Huang S."/>
            <person name="Liu Z."/>
            <person name="Mo X."/>
            <person name="Guan Y."/>
            <person name="Wang X."/>
            <person name="Fu Y."/>
            <person name="Ma D."/>
            <person name="Wang Y."/>
            <person name="Kong W."/>
        </authorList>
    </citation>
    <scope>FUNCTION</scope>
</reference>
<evidence type="ECO:0000250" key="1"/>
<evidence type="ECO:0000250" key="2">
    <source>
        <dbReference type="UniProtKB" id="O95136"/>
    </source>
</evidence>
<evidence type="ECO:0000255" key="3"/>
<evidence type="ECO:0000255" key="4">
    <source>
        <dbReference type="PROSITE-ProRule" id="PRU00521"/>
    </source>
</evidence>
<evidence type="ECO:0000269" key="5">
    <source>
    </source>
</evidence>
<evidence type="ECO:0000269" key="6">
    <source>
    </source>
</evidence>
<name>S1PR2_RAT</name>
<dbReference type="EMBL" id="AB016931">
    <property type="protein sequence ID" value="BAA32454.1"/>
    <property type="molecule type" value="mRNA"/>
</dbReference>
<dbReference type="EMBL" id="U10699">
    <property type="protein sequence ID" value="AAA19241.1"/>
    <property type="molecule type" value="mRNA"/>
</dbReference>
<dbReference type="EMBL" id="AF022138">
    <property type="protein sequence ID" value="AAC53494.1"/>
    <property type="molecule type" value="mRNA"/>
</dbReference>
<dbReference type="PIR" id="JC1465">
    <property type="entry name" value="JC1465"/>
</dbReference>
<dbReference type="RefSeq" id="NP_058888.1">
    <property type="nucleotide sequence ID" value="NM_017192.2"/>
</dbReference>
<dbReference type="SMR" id="P47752"/>
<dbReference type="FunCoup" id="P47752">
    <property type="interactions" value="437"/>
</dbReference>
<dbReference type="STRING" id="10116.ENSRNOP00000028034"/>
<dbReference type="BindingDB" id="P47752"/>
<dbReference type="ChEMBL" id="CHEMBL3616360"/>
<dbReference type="GuidetoPHARMACOLOGY" id="276"/>
<dbReference type="GlyCosmos" id="P47752">
    <property type="glycosylation" value="1 site, No reported glycans"/>
</dbReference>
<dbReference type="GlyGen" id="P47752">
    <property type="glycosylation" value="1 site"/>
</dbReference>
<dbReference type="iPTMnet" id="P47752"/>
<dbReference type="PhosphoSitePlus" id="P47752"/>
<dbReference type="PaxDb" id="10116-ENSRNOP00000028034"/>
<dbReference type="Ensembl" id="ENSRNOT00000107018.1">
    <property type="protein sequence ID" value="ENSRNOP00000080559.1"/>
    <property type="gene ID" value="ENSRNOG00000020653.5"/>
</dbReference>
<dbReference type="GeneID" id="29415"/>
<dbReference type="KEGG" id="rno:29415"/>
<dbReference type="UCSC" id="RGD:68334">
    <property type="organism name" value="rat"/>
</dbReference>
<dbReference type="AGR" id="RGD:68334"/>
<dbReference type="CTD" id="9294"/>
<dbReference type="RGD" id="68334">
    <property type="gene designation" value="S1pr2"/>
</dbReference>
<dbReference type="eggNOG" id="ENOG502QVQY">
    <property type="taxonomic scope" value="Eukaryota"/>
</dbReference>
<dbReference type="GeneTree" id="ENSGT01050000244887"/>
<dbReference type="HOGENOM" id="CLU_047979_1_0_1"/>
<dbReference type="InParanoid" id="P47752"/>
<dbReference type="OrthoDB" id="59438at9989"/>
<dbReference type="PhylomeDB" id="P47752"/>
<dbReference type="TreeFam" id="TF330052"/>
<dbReference type="Reactome" id="R-RNO-418594">
    <property type="pathway name" value="G alpha (i) signalling events"/>
</dbReference>
<dbReference type="Reactome" id="R-RNO-419408">
    <property type="pathway name" value="Lysosphingolipid and LPA receptors"/>
</dbReference>
<dbReference type="PRO" id="PR:P47752"/>
<dbReference type="Proteomes" id="UP000002494">
    <property type="component" value="Chromosome 8"/>
</dbReference>
<dbReference type="Bgee" id="ENSRNOG00000020653">
    <property type="expression patterns" value="Expressed in lung and 19 other cell types or tissues"/>
</dbReference>
<dbReference type="GO" id="GO:0005737">
    <property type="term" value="C:cytoplasm"/>
    <property type="evidence" value="ECO:0000318"/>
    <property type="project" value="GO_Central"/>
</dbReference>
<dbReference type="GO" id="GO:0098978">
    <property type="term" value="C:glutamatergic synapse"/>
    <property type="evidence" value="ECO:0000266"/>
    <property type="project" value="RGD"/>
</dbReference>
<dbReference type="GO" id="GO:0005886">
    <property type="term" value="C:plasma membrane"/>
    <property type="evidence" value="ECO:0000266"/>
    <property type="project" value="RGD"/>
</dbReference>
<dbReference type="GO" id="GO:0098794">
    <property type="term" value="C:postsynapse"/>
    <property type="evidence" value="ECO:0007669"/>
    <property type="project" value="GOC"/>
</dbReference>
<dbReference type="GO" id="GO:0098793">
    <property type="term" value="C:presynapse"/>
    <property type="evidence" value="ECO:0000266"/>
    <property type="project" value="RGD"/>
</dbReference>
<dbReference type="GO" id="GO:0008528">
    <property type="term" value="F:G protein-coupled peptide receptor activity"/>
    <property type="evidence" value="ECO:0000314"/>
    <property type="project" value="MGI"/>
</dbReference>
<dbReference type="GO" id="GO:0004930">
    <property type="term" value="F:G protein-coupled receptor activity"/>
    <property type="evidence" value="ECO:0000314"/>
    <property type="project" value="RGD"/>
</dbReference>
<dbReference type="GO" id="GO:0001664">
    <property type="term" value="F:G protein-coupled receptor binding"/>
    <property type="evidence" value="ECO:0000266"/>
    <property type="project" value="RGD"/>
</dbReference>
<dbReference type="GO" id="GO:0005178">
    <property type="term" value="F:integrin binding"/>
    <property type="evidence" value="ECO:0000266"/>
    <property type="project" value="RGD"/>
</dbReference>
<dbReference type="GO" id="GO:0038036">
    <property type="term" value="F:sphingosine-1-phosphate receptor activity"/>
    <property type="evidence" value="ECO:0000266"/>
    <property type="project" value="RGD"/>
</dbReference>
<dbReference type="GO" id="GO:0030036">
    <property type="term" value="P:actin cytoskeleton organization"/>
    <property type="evidence" value="ECO:0000266"/>
    <property type="project" value="RGD"/>
</dbReference>
<dbReference type="GO" id="GO:0007189">
    <property type="term" value="P:adenylate cyclase-activating G protein-coupled receptor signaling pathway"/>
    <property type="evidence" value="ECO:0000318"/>
    <property type="project" value="GO_Central"/>
</dbReference>
<dbReference type="GO" id="GO:0060079">
    <property type="term" value="P:excitatory postsynaptic potential"/>
    <property type="evidence" value="ECO:0000266"/>
    <property type="project" value="RGD"/>
</dbReference>
<dbReference type="GO" id="GO:0046847">
    <property type="term" value="P:filopodium assembly"/>
    <property type="evidence" value="ECO:0000266"/>
    <property type="project" value="RGD"/>
</dbReference>
<dbReference type="GO" id="GO:0007186">
    <property type="term" value="P:G protein-coupled receptor signaling pathway"/>
    <property type="evidence" value="ECO:0000314"/>
    <property type="project" value="MGI"/>
</dbReference>
<dbReference type="GO" id="GO:0090394">
    <property type="term" value="P:negative regulation of excitatory postsynaptic potential"/>
    <property type="evidence" value="ECO:0000266"/>
    <property type="project" value="RGD"/>
</dbReference>
<dbReference type="GO" id="GO:0014912">
    <property type="term" value="P:negative regulation of smooth muscle cell migration"/>
    <property type="evidence" value="ECO:0000316"/>
    <property type="project" value="MGI"/>
</dbReference>
<dbReference type="GO" id="GO:1904706">
    <property type="term" value="P:negative regulation of vascular associated smooth muscle cell proliferation"/>
    <property type="evidence" value="ECO:0000316"/>
    <property type="project" value="MGI"/>
</dbReference>
<dbReference type="GO" id="GO:1903142">
    <property type="term" value="P:positive regulation of establishment of endothelial barrier"/>
    <property type="evidence" value="ECO:0000266"/>
    <property type="project" value="RGD"/>
</dbReference>
<dbReference type="GO" id="GO:0019222">
    <property type="term" value="P:regulation of metabolic process"/>
    <property type="evidence" value="ECO:0000318"/>
    <property type="project" value="GO_Central"/>
</dbReference>
<dbReference type="GO" id="GO:0150052">
    <property type="term" value="P:regulation of postsynapse assembly"/>
    <property type="evidence" value="ECO:0000266"/>
    <property type="project" value="RGD"/>
</dbReference>
<dbReference type="GO" id="GO:0003376">
    <property type="term" value="P:sphingosine-1-phosphate receptor signaling pathway"/>
    <property type="evidence" value="ECO:0000266"/>
    <property type="project" value="RGD"/>
</dbReference>
<dbReference type="CDD" id="cd15347">
    <property type="entry name" value="7tmA_S1PR2_Edg5"/>
    <property type="match status" value="1"/>
</dbReference>
<dbReference type="FunFam" id="1.20.1070.10:FF:000098">
    <property type="entry name" value="Sphingosine 1-phosphate receptor 1"/>
    <property type="match status" value="1"/>
</dbReference>
<dbReference type="Gene3D" id="1.20.1070.10">
    <property type="entry name" value="Rhodopsin 7-helix transmembrane proteins"/>
    <property type="match status" value="1"/>
</dbReference>
<dbReference type="InterPro" id="IPR004063">
    <property type="entry name" value="EDG5_rcpt"/>
</dbReference>
<dbReference type="InterPro" id="IPR000276">
    <property type="entry name" value="GPCR_Rhodpsn"/>
</dbReference>
<dbReference type="InterPro" id="IPR017452">
    <property type="entry name" value="GPCR_Rhodpsn_7TM"/>
</dbReference>
<dbReference type="InterPro" id="IPR004061">
    <property type="entry name" value="S1P_rcpt"/>
</dbReference>
<dbReference type="PANTHER" id="PTHR22750">
    <property type="entry name" value="G-PROTEIN COUPLED RECEPTOR"/>
    <property type="match status" value="1"/>
</dbReference>
<dbReference type="Pfam" id="PF00001">
    <property type="entry name" value="7tm_1"/>
    <property type="match status" value="1"/>
</dbReference>
<dbReference type="PRINTS" id="PR01525">
    <property type="entry name" value="EDG5RECEPTOR"/>
</dbReference>
<dbReference type="PRINTS" id="PR00237">
    <property type="entry name" value="GPCRRHODOPSN"/>
</dbReference>
<dbReference type="PRINTS" id="PR01523">
    <property type="entry name" value="S1PRECEPTOR"/>
</dbReference>
<dbReference type="SMART" id="SM01381">
    <property type="entry name" value="7TM_GPCR_Srsx"/>
    <property type="match status" value="1"/>
</dbReference>
<dbReference type="SUPFAM" id="SSF81321">
    <property type="entry name" value="Family A G protein-coupled receptor-like"/>
    <property type="match status" value="1"/>
</dbReference>
<dbReference type="PROSITE" id="PS50262">
    <property type="entry name" value="G_PROTEIN_RECEP_F1_2"/>
    <property type="match status" value="1"/>
</dbReference>
<accession>P47752</accession>
<accession>Q54AI6</accession>